<gene>
    <name evidence="1" type="primary">yciB</name>
    <name type="ordered locus">Veis_1802</name>
</gene>
<protein>
    <recommendedName>
        <fullName evidence="1">Inner membrane-spanning protein YciB</fullName>
    </recommendedName>
</protein>
<accession>A1WIU9</accession>
<dbReference type="EMBL" id="CP000542">
    <property type="protein sequence ID" value="ABM57556.1"/>
    <property type="molecule type" value="Genomic_DNA"/>
</dbReference>
<dbReference type="RefSeq" id="WP_011809563.1">
    <property type="nucleotide sequence ID" value="NC_008786.1"/>
</dbReference>
<dbReference type="STRING" id="391735.Veis_1802"/>
<dbReference type="GeneID" id="76460408"/>
<dbReference type="KEGG" id="vei:Veis_1802"/>
<dbReference type="eggNOG" id="COG2917">
    <property type="taxonomic scope" value="Bacteria"/>
</dbReference>
<dbReference type="HOGENOM" id="CLU_089554_2_0_4"/>
<dbReference type="OrthoDB" id="9788219at2"/>
<dbReference type="Proteomes" id="UP000000374">
    <property type="component" value="Chromosome"/>
</dbReference>
<dbReference type="GO" id="GO:0005886">
    <property type="term" value="C:plasma membrane"/>
    <property type="evidence" value="ECO:0007669"/>
    <property type="project" value="UniProtKB-SubCell"/>
</dbReference>
<dbReference type="HAMAP" id="MF_00189">
    <property type="entry name" value="YciB"/>
    <property type="match status" value="1"/>
</dbReference>
<dbReference type="InterPro" id="IPR006008">
    <property type="entry name" value="YciB"/>
</dbReference>
<dbReference type="NCBIfam" id="TIGR00997">
    <property type="entry name" value="ispZ"/>
    <property type="match status" value="1"/>
</dbReference>
<dbReference type="NCBIfam" id="NF001325">
    <property type="entry name" value="PRK00259.1-3"/>
    <property type="match status" value="1"/>
</dbReference>
<dbReference type="PANTHER" id="PTHR36917:SF1">
    <property type="entry name" value="INNER MEMBRANE-SPANNING PROTEIN YCIB"/>
    <property type="match status" value="1"/>
</dbReference>
<dbReference type="PANTHER" id="PTHR36917">
    <property type="entry name" value="INTRACELLULAR SEPTATION PROTEIN A-RELATED"/>
    <property type="match status" value="1"/>
</dbReference>
<dbReference type="Pfam" id="PF04279">
    <property type="entry name" value="IspA"/>
    <property type="match status" value="1"/>
</dbReference>
<feature type="chain" id="PRO_1000021071" description="Inner membrane-spanning protein YciB">
    <location>
        <begin position="1"/>
        <end position="178"/>
    </location>
</feature>
<feature type="transmembrane region" description="Helical" evidence="1">
    <location>
        <begin position="10"/>
        <end position="30"/>
    </location>
</feature>
<feature type="transmembrane region" description="Helical" evidence="1">
    <location>
        <begin position="47"/>
        <end position="67"/>
    </location>
</feature>
<feature type="transmembrane region" description="Helical" evidence="1">
    <location>
        <begin position="76"/>
        <end position="96"/>
    </location>
</feature>
<feature type="transmembrane region" description="Helical" evidence="1">
    <location>
        <begin position="121"/>
        <end position="141"/>
    </location>
</feature>
<feature type="transmembrane region" description="Helical" evidence="1">
    <location>
        <begin position="151"/>
        <end position="171"/>
    </location>
</feature>
<proteinExistence type="inferred from homology"/>
<evidence type="ECO:0000255" key="1">
    <source>
        <dbReference type="HAMAP-Rule" id="MF_00189"/>
    </source>
</evidence>
<sequence length="178" mass="20251">MKILLDFLPIVLFFGSYKLYGIYVATAVLMAATALQMALIYAIDRRLQTMHKVTLALILSFGALTLALQDDRFIKWKPTVLYGAMSVALALTLWALKKNFLKLLLGSQLALPDMVWLRLNWAWIAYCAFMSAINAYVVLHWSTDAWVDFKLWGYVFPLVFLIGQGLYIAPHLKNQGRT</sequence>
<keyword id="KW-0997">Cell inner membrane</keyword>
<keyword id="KW-1003">Cell membrane</keyword>
<keyword id="KW-0472">Membrane</keyword>
<keyword id="KW-1185">Reference proteome</keyword>
<keyword id="KW-0812">Transmembrane</keyword>
<keyword id="KW-1133">Transmembrane helix</keyword>
<comment type="function">
    <text evidence="1">Plays a role in cell envelope biogenesis, maintenance of cell envelope integrity and membrane homeostasis.</text>
</comment>
<comment type="subcellular location">
    <subcellularLocation>
        <location evidence="1">Cell inner membrane</location>
        <topology evidence="1">Multi-pass membrane protein</topology>
    </subcellularLocation>
</comment>
<comment type="similarity">
    <text evidence="1">Belongs to the YciB family.</text>
</comment>
<name>YCIB_VEREI</name>
<organism>
    <name type="scientific">Verminephrobacter eiseniae (strain EF01-2)</name>
    <dbReference type="NCBI Taxonomy" id="391735"/>
    <lineage>
        <taxon>Bacteria</taxon>
        <taxon>Pseudomonadati</taxon>
        <taxon>Pseudomonadota</taxon>
        <taxon>Betaproteobacteria</taxon>
        <taxon>Burkholderiales</taxon>
        <taxon>Comamonadaceae</taxon>
        <taxon>Verminephrobacter</taxon>
    </lineage>
</organism>
<reference key="1">
    <citation type="submission" date="2006-12" db="EMBL/GenBank/DDBJ databases">
        <title>Complete sequence of chromosome 1 of Verminephrobacter eiseniae EF01-2.</title>
        <authorList>
            <person name="Copeland A."/>
            <person name="Lucas S."/>
            <person name="Lapidus A."/>
            <person name="Barry K."/>
            <person name="Detter J.C."/>
            <person name="Glavina del Rio T."/>
            <person name="Dalin E."/>
            <person name="Tice H."/>
            <person name="Pitluck S."/>
            <person name="Chertkov O."/>
            <person name="Brettin T."/>
            <person name="Bruce D."/>
            <person name="Han C."/>
            <person name="Tapia R."/>
            <person name="Gilna P."/>
            <person name="Schmutz J."/>
            <person name="Larimer F."/>
            <person name="Land M."/>
            <person name="Hauser L."/>
            <person name="Kyrpides N."/>
            <person name="Kim E."/>
            <person name="Stahl D."/>
            <person name="Richardson P."/>
        </authorList>
    </citation>
    <scope>NUCLEOTIDE SEQUENCE [LARGE SCALE GENOMIC DNA]</scope>
    <source>
        <strain>EF01-2</strain>
    </source>
</reference>